<name>EIF3G_EMENI</name>
<feature type="chain" id="PRO_0000365444" description="Eukaryotic translation initiation factor 3 subunit G">
    <location>
        <begin position="1"/>
        <end position="289"/>
    </location>
</feature>
<feature type="domain" description="RRM" evidence="1">
    <location>
        <begin position="209"/>
        <end position="287"/>
    </location>
</feature>
<feature type="region of interest" description="Disordered" evidence="2">
    <location>
        <begin position="1"/>
        <end position="33"/>
    </location>
</feature>
<reference key="1">
    <citation type="journal article" date="2005" name="Nature">
        <title>Sequencing of Aspergillus nidulans and comparative analysis with A. fumigatus and A. oryzae.</title>
        <authorList>
            <person name="Galagan J.E."/>
            <person name="Calvo S.E."/>
            <person name="Cuomo C."/>
            <person name="Ma L.-J."/>
            <person name="Wortman J.R."/>
            <person name="Batzoglou S."/>
            <person name="Lee S.-I."/>
            <person name="Bastuerkmen M."/>
            <person name="Spevak C.C."/>
            <person name="Clutterbuck J."/>
            <person name="Kapitonov V."/>
            <person name="Jurka J."/>
            <person name="Scazzocchio C."/>
            <person name="Farman M.L."/>
            <person name="Butler J."/>
            <person name="Purcell S."/>
            <person name="Harris S."/>
            <person name="Braus G.H."/>
            <person name="Draht O."/>
            <person name="Busch S."/>
            <person name="D'Enfert C."/>
            <person name="Bouchier C."/>
            <person name="Goldman G.H."/>
            <person name="Bell-Pedersen D."/>
            <person name="Griffiths-Jones S."/>
            <person name="Doonan J.H."/>
            <person name="Yu J."/>
            <person name="Vienken K."/>
            <person name="Pain A."/>
            <person name="Freitag M."/>
            <person name="Selker E.U."/>
            <person name="Archer D.B."/>
            <person name="Penalva M.A."/>
            <person name="Oakley B.R."/>
            <person name="Momany M."/>
            <person name="Tanaka T."/>
            <person name="Kumagai T."/>
            <person name="Asai K."/>
            <person name="Machida M."/>
            <person name="Nierman W.C."/>
            <person name="Denning D.W."/>
            <person name="Caddick M.X."/>
            <person name="Hynes M."/>
            <person name="Paoletti M."/>
            <person name="Fischer R."/>
            <person name="Miller B.L."/>
            <person name="Dyer P.S."/>
            <person name="Sachs M.S."/>
            <person name="Osmani S.A."/>
            <person name="Birren B.W."/>
        </authorList>
    </citation>
    <scope>NUCLEOTIDE SEQUENCE [LARGE SCALE GENOMIC DNA]</scope>
    <source>
        <strain>FGSC A4 / ATCC 38163 / CBS 112.46 / NRRL 194 / M139</strain>
    </source>
</reference>
<reference key="2">
    <citation type="journal article" date="2009" name="Fungal Genet. Biol.">
        <title>The 2008 update of the Aspergillus nidulans genome annotation: a community effort.</title>
        <authorList>
            <person name="Wortman J.R."/>
            <person name="Gilsenan J.M."/>
            <person name="Joardar V."/>
            <person name="Deegan J."/>
            <person name="Clutterbuck J."/>
            <person name="Andersen M.R."/>
            <person name="Archer D."/>
            <person name="Bencina M."/>
            <person name="Braus G."/>
            <person name="Coutinho P."/>
            <person name="von Dohren H."/>
            <person name="Doonan J."/>
            <person name="Driessen A.J."/>
            <person name="Durek P."/>
            <person name="Espeso E."/>
            <person name="Fekete E."/>
            <person name="Flipphi M."/>
            <person name="Estrada C.G."/>
            <person name="Geysens S."/>
            <person name="Goldman G."/>
            <person name="de Groot P.W."/>
            <person name="Hansen K."/>
            <person name="Harris S.D."/>
            <person name="Heinekamp T."/>
            <person name="Helmstaedt K."/>
            <person name="Henrissat B."/>
            <person name="Hofmann G."/>
            <person name="Homan T."/>
            <person name="Horio T."/>
            <person name="Horiuchi H."/>
            <person name="James S."/>
            <person name="Jones M."/>
            <person name="Karaffa L."/>
            <person name="Karanyi Z."/>
            <person name="Kato M."/>
            <person name="Keller N."/>
            <person name="Kelly D.E."/>
            <person name="Kiel J.A."/>
            <person name="Kim J.M."/>
            <person name="van der Klei I.J."/>
            <person name="Klis F.M."/>
            <person name="Kovalchuk A."/>
            <person name="Krasevec N."/>
            <person name="Kubicek C.P."/>
            <person name="Liu B."/>
            <person name="Maccabe A."/>
            <person name="Meyer V."/>
            <person name="Mirabito P."/>
            <person name="Miskei M."/>
            <person name="Mos M."/>
            <person name="Mullins J."/>
            <person name="Nelson D.R."/>
            <person name="Nielsen J."/>
            <person name="Oakley B.R."/>
            <person name="Osmani S.A."/>
            <person name="Pakula T."/>
            <person name="Paszewski A."/>
            <person name="Paulsen I."/>
            <person name="Pilsyk S."/>
            <person name="Pocsi I."/>
            <person name="Punt P.J."/>
            <person name="Ram A.F."/>
            <person name="Ren Q."/>
            <person name="Robellet X."/>
            <person name="Robson G."/>
            <person name="Seiboth B."/>
            <person name="van Solingen P."/>
            <person name="Specht T."/>
            <person name="Sun J."/>
            <person name="Taheri-Talesh N."/>
            <person name="Takeshita N."/>
            <person name="Ussery D."/>
            <person name="vanKuyk P.A."/>
            <person name="Visser H."/>
            <person name="van de Vondervoort P.J."/>
            <person name="de Vries R.P."/>
            <person name="Walton J."/>
            <person name="Xiang X."/>
            <person name="Xiong Y."/>
            <person name="Zeng A.P."/>
            <person name="Brandt B.W."/>
            <person name="Cornell M.J."/>
            <person name="van den Hondel C.A."/>
            <person name="Visser J."/>
            <person name="Oliver S.G."/>
            <person name="Turner G."/>
        </authorList>
    </citation>
    <scope>GENOME REANNOTATION</scope>
    <source>
        <strain>FGSC A4 / ATCC 38163 / CBS 112.46 / NRRL 194 / M139</strain>
    </source>
</reference>
<dbReference type="EMBL" id="AACD01000103">
    <property type="protein sequence ID" value="EAA57658.1"/>
    <property type="status" value="ALT_SEQ"/>
    <property type="molecule type" value="Genomic_DNA"/>
</dbReference>
<dbReference type="EMBL" id="BN001301">
    <property type="protein sequence ID" value="CBF70356.1"/>
    <property type="molecule type" value="Genomic_DNA"/>
</dbReference>
<dbReference type="RefSeq" id="XP_663621.1">
    <property type="nucleotide sequence ID" value="XM_658529.1"/>
</dbReference>
<dbReference type="SMR" id="C8V330"/>
<dbReference type="FunCoup" id="C8V330">
    <property type="interactions" value="1084"/>
</dbReference>
<dbReference type="STRING" id="227321.C8V330"/>
<dbReference type="EnsemblFungi" id="CBF70356">
    <property type="protein sequence ID" value="CBF70356"/>
    <property type="gene ID" value="ANIA_10765"/>
</dbReference>
<dbReference type="KEGG" id="ani:ANIA_10765"/>
<dbReference type="VEuPathDB" id="FungiDB:AN10765"/>
<dbReference type="eggNOG" id="KOG0122">
    <property type="taxonomic scope" value="Eukaryota"/>
</dbReference>
<dbReference type="HOGENOM" id="CLU_019836_0_0_1"/>
<dbReference type="InParanoid" id="C8V330"/>
<dbReference type="OMA" id="ICQGDHF"/>
<dbReference type="OrthoDB" id="639027at2759"/>
<dbReference type="Proteomes" id="UP000000560">
    <property type="component" value="Chromosome I"/>
</dbReference>
<dbReference type="GO" id="GO:0016282">
    <property type="term" value="C:eukaryotic 43S preinitiation complex"/>
    <property type="evidence" value="ECO:0007669"/>
    <property type="project" value="UniProtKB-UniRule"/>
</dbReference>
<dbReference type="GO" id="GO:0033290">
    <property type="term" value="C:eukaryotic 48S preinitiation complex"/>
    <property type="evidence" value="ECO:0007669"/>
    <property type="project" value="UniProtKB-UniRule"/>
</dbReference>
<dbReference type="GO" id="GO:0071540">
    <property type="term" value="C:eukaryotic translation initiation factor 3 complex, eIF3e"/>
    <property type="evidence" value="ECO:0007669"/>
    <property type="project" value="EnsemblFungi"/>
</dbReference>
<dbReference type="GO" id="GO:0071541">
    <property type="term" value="C:eukaryotic translation initiation factor 3 complex, eIF3m"/>
    <property type="evidence" value="ECO:0007669"/>
    <property type="project" value="EnsemblFungi"/>
</dbReference>
<dbReference type="GO" id="GO:0043614">
    <property type="term" value="C:multi-eIF complex"/>
    <property type="evidence" value="ECO:0007669"/>
    <property type="project" value="EnsemblFungi"/>
</dbReference>
<dbReference type="GO" id="GO:0003723">
    <property type="term" value="F:RNA binding"/>
    <property type="evidence" value="ECO:0007669"/>
    <property type="project" value="UniProtKB-UniRule"/>
</dbReference>
<dbReference type="GO" id="GO:0003743">
    <property type="term" value="F:translation initiation factor activity"/>
    <property type="evidence" value="ECO:0007669"/>
    <property type="project" value="UniProtKB-UniRule"/>
</dbReference>
<dbReference type="GO" id="GO:0001732">
    <property type="term" value="P:formation of cytoplasmic translation initiation complex"/>
    <property type="evidence" value="ECO:0007669"/>
    <property type="project" value="UniProtKB-UniRule"/>
</dbReference>
<dbReference type="GO" id="GO:0002188">
    <property type="term" value="P:translation reinitiation"/>
    <property type="evidence" value="ECO:0007669"/>
    <property type="project" value="EnsemblFungi"/>
</dbReference>
<dbReference type="GO" id="GO:0006415">
    <property type="term" value="P:translational termination"/>
    <property type="evidence" value="ECO:0007669"/>
    <property type="project" value="EnsemblFungi"/>
</dbReference>
<dbReference type="CDD" id="cd12933">
    <property type="entry name" value="eIF3G"/>
    <property type="match status" value="1"/>
</dbReference>
<dbReference type="CDD" id="cd12408">
    <property type="entry name" value="RRM_eIF3G_like"/>
    <property type="match status" value="1"/>
</dbReference>
<dbReference type="FunFam" id="3.30.70.330:FF:000328">
    <property type="entry name" value="Eukaryotic translation initiation factor 3 subunit G"/>
    <property type="match status" value="1"/>
</dbReference>
<dbReference type="Gene3D" id="3.30.70.330">
    <property type="match status" value="1"/>
</dbReference>
<dbReference type="HAMAP" id="MF_03006">
    <property type="entry name" value="eIF3g"/>
    <property type="match status" value="1"/>
</dbReference>
<dbReference type="InterPro" id="IPR017334">
    <property type="entry name" value="eIF3_g"/>
</dbReference>
<dbReference type="InterPro" id="IPR024675">
    <property type="entry name" value="eIF3g_N"/>
</dbReference>
<dbReference type="InterPro" id="IPR034240">
    <property type="entry name" value="eIF3G_RRM"/>
</dbReference>
<dbReference type="InterPro" id="IPR012677">
    <property type="entry name" value="Nucleotide-bd_a/b_plait_sf"/>
</dbReference>
<dbReference type="InterPro" id="IPR035979">
    <property type="entry name" value="RBD_domain_sf"/>
</dbReference>
<dbReference type="InterPro" id="IPR000504">
    <property type="entry name" value="RRM_dom"/>
</dbReference>
<dbReference type="PANTHER" id="PTHR10352">
    <property type="entry name" value="EUKARYOTIC TRANSLATION INITIATION FACTOR 3 SUBUNIT G"/>
    <property type="match status" value="1"/>
</dbReference>
<dbReference type="Pfam" id="PF12353">
    <property type="entry name" value="eIF3g"/>
    <property type="match status" value="1"/>
</dbReference>
<dbReference type="Pfam" id="PF00076">
    <property type="entry name" value="RRM_1"/>
    <property type="match status" value="1"/>
</dbReference>
<dbReference type="PIRSF" id="PIRSF037949">
    <property type="entry name" value="Transl_init_eIF-3_RNA-bind"/>
    <property type="match status" value="1"/>
</dbReference>
<dbReference type="SMART" id="SM00360">
    <property type="entry name" value="RRM"/>
    <property type="match status" value="1"/>
</dbReference>
<dbReference type="SUPFAM" id="SSF54928">
    <property type="entry name" value="RNA-binding domain, RBD"/>
    <property type="match status" value="1"/>
</dbReference>
<dbReference type="PROSITE" id="PS50102">
    <property type="entry name" value="RRM"/>
    <property type="match status" value="1"/>
</dbReference>
<comment type="function">
    <text evidence="1">RNA-binding component of the eukaryotic translation initiation factor 3 (eIF-3) complex, which is involved in protein synthesis of a specialized repertoire of mRNAs and, together with other initiation factors, stimulates binding of mRNA and methionyl-tRNAi to the 40S ribosome. The eIF-3 complex specifically targets and initiates translation of a subset of mRNAs involved in cell proliferation. This subunit can bind 18S rRNA.</text>
</comment>
<comment type="subunit">
    <text evidence="1">Component of the eukaryotic translation initiation factor 3 (eIF-3) complex.</text>
</comment>
<comment type="subcellular location">
    <subcellularLocation>
        <location evidence="1">Cytoplasm</location>
    </subcellularLocation>
</comment>
<comment type="similarity">
    <text evidence="1">Belongs to the eIF-3 subunit G family.</text>
</comment>
<comment type="sequence caution" evidence="3">
    <conflict type="erroneous gene model prediction">
        <sequence resource="EMBL-CDS" id="EAA57658"/>
    </conflict>
    <text>The predicted gene AN6017 has been split into 2 genes: AN10765 and AN10767.</text>
</comment>
<gene>
    <name type="primary">tif35</name>
    <name type="ORF">AN10765</name>
</gene>
<organism>
    <name type="scientific">Emericella nidulans (strain FGSC A4 / ATCC 38163 / CBS 112.46 / NRRL 194 / M139)</name>
    <name type="common">Aspergillus nidulans</name>
    <dbReference type="NCBI Taxonomy" id="227321"/>
    <lineage>
        <taxon>Eukaryota</taxon>
        <taxon>Fungi</taxon>
        <taxon>Dikarya</taxon>
        <taxon>Ascomycota</taxon>
        <taxon>Pezizomycotina</taxon>
        <taxon>Eurotiomycetes</taxon>
        <taxon>Eurotiomycetidae</taxon>
        <taxon>Eurotiales</taxon>
        <taxon>Aspergillaceae</taxon>
        <taxon>Aspergillus</taxon>
        <taxon>Aspergillus subgen. Nidulantes</taxon>
    </lineage>
</organism>
<sequence>MSRPTKADWADDEEFDDPSALPPQQITTNKDGTKTVVSYRFNDEGKKVKVTRRIKTTVVREHVNPQVAERRTWAKFGLEKGHAAGPSFDTTSVGENIVFRPSVNWKAQAAEAEKNGGEKGSIKDQLKDKKVKCRICSGEHFTARCPFKDTMAPVDEPGAGGAEGGAAAGEDAAGGLGAGGGSYVPPHLRKGAAGGGERMAGKYEKDDLATLRVTNVSELAEEQELRDLFERFGRVTRVFLARDRETQRAKGFAFISFADRSDAARACDKMDGFGYRHLILRVEFAKRAT</sequence>
<proteinExistence type="inferred from homology"/>
<accession>C8V330</accession>
<accession>Q5B0B3</accession>
<evidence type="ECO:0000255" key="1">
    <source>
        <dbReference type="HAMAP-Rule" id="MF_03006"/>
    </source>
</evidence>
<evidence type="ECO:0000256" key="2">
    <source>
        <dbReference type="SAM" id="MobiDB-lite"/>
    </source>
</evidence>
<evidence type="ECO:0000305" key="3"/>
<keyword id="KW-0963">Cytoplasm</keyword>
<keyword id="KW-0396">Initiation factor</keyword>
<keyword id="KW-0648">Protein biosynthesis</keyword>
<keyword id="KW-1185">Reference proteome</keyword>
<keyword id="KW-0694">RNA-binding</keyword>
<protein>
    <recommendedName>
        <fullName evidence="1">Eukaryotic translation initiation factor 3 subunit G</fullName>
        <shortName evidence="1">eIF3g</shortName>
    </recommendedName>
    <alternativeName>
        <fullName evidence="1">Eukaryotic translation initiation factor 3 RNA-binding subunit</fullName>
        <shortName evidence="1">eIF-3 RNA-binding subunit</shortName>
    </alternativeName>
    <alternativeName>
        <fullName evidence="1">Translation initiation factor eIF3 p33 subunit homolog</fullName>
        <shortName evidence="1">eIF3 p33 homolog</shortName>
    </alternativeName>
</protein>